<comment type="function">
    <text evidence="1">Involved in the biosynthesis of the central metabolite phospho-alpha-D-ribosyl-1-pyrophosphate (PRPP) via the transfer of pyrophosphoryl group from ATP to 1-hydroxyl of ribose-5-phosphate (Rib-5-P).</text>
</comment>
<comment type="catalytic activity">
    <reaction evidence="1">
        <text>D-ribose 5-phosphate + ATP = 5-phospho-alpha-D-ribose 1-diphosphate + AMP + H(+)</text>
        <dbReference type="Rhea" id="RHEA:15609"/>
        <dbReference type="ChEBI" id="CHEBI:15378"/>
        <dbReference type="ChEBI" id="CHEBI:30616"/>
        <dbReference type="ChEBI" id="CHEBI:58017"/>
        <dbReference type="ChEBI" id="CHEBI:78346"/>
        <dbReference type="ChEBI" id="CHEBI:456215"/>
        <dbReference type="EC" id="2.7.6.1"/>
    </reaction>
</comment>
<comment type="cofactor">
    <cofactor evidence="1">
        <name>Mg(2+)</name>
        <dbReference type="ChEBI" id="CHEBI:18420"/>
    </cofactor>
    <text evidence="1">Binds 2 Mg(2+) ions per subunit.</text>
</comment>
<comment type="pathway">
    <text evidence="1">Metabolic intermediate biosynthesis; 5-phospho-alpha-D-ribose 1-diphosphate biosynthesis; 5-phospho-alpha-D-ribose 1-diphosphate from D-ribose 5-phosphate (route I): step 1/1.</text>
</comment>
<comment type="subunit">
    <text evidence="1">Homohexamer.</text>
</comment>
<comment type="subcellular location">
    <subcellularLocation>
        <location evidence="1">Cytoplasm</location>
    </subcellularLocation>
</comment>
<comment type="similarity">
    <text evidence="1">Belongs to the ribose-phosphate pyrophosphokinase family. Class I subfamily.</text>
</comment>
<evidence type="ECO:0000255" key="1">
    <source>
        <dbReference type="HAMAP-Rule" id="MF_00583"/>
    </source>
</evidence>
<accession>Q0BPP0</accession>
<sequence length="310" mass="33250">MKIVACNSNRPLAEAVAAALNLPLTKASVRRFADMEVFVEIHENVRGEDVFVIQSTSYPANDNLMELLITLDALRRGSARRVTAVIPYFGYARQDRKSGPRTPISAKLVANLITEAGANRVLTMDLHAGQIQGFFDIPVDNLYAAPLFARDIAERFHGRDIMIVSPDVGGVLRARAIATRLNTDLAIIDKRRERAGVSEVMNVIGDVEGRDCILIDDICDSGGTLCNAAAALIANGAASASVYTTHGVLSGGAVARIASSPISMMTITDSILATEAVRLAQNVRQLTIAPLLAEAMRRISDESSVSSLFD</sequence>
<dbReference type="EC" id="2.7.6.1" evidence="1"/>
<dbReference type="EMBL" id="CP000394">
    <property type="protein sequence ID" value="ABI63212.1"/>
    <property type="molecule type" value="Genomic_DNA"/>
</dbReference>
<dbReference type="RefSeq" id="WP_011633014.1">
    <property type="nucleotide sequence ID" value="NC_008343.2"/>
</dbReference>
<dbReference type="SMR" id="Q0BPP0"/>
<dbReference type="STRING" id="391165.GbCGDNIH1_2314"/>
<dbReference type="GeneID" id="69746493"/>
<dbReference type="KEGG" id="gbe:GbCGDNIH1_2314"/>
<dbReference type="eggNOG" id="COG0462">
    <property type="taxonomic scope" value="Bacteria"/>
</dbReference>
<dbReference type="HOGENOM" id="CLU_033546_2_0_5"/>
<dbReference type="OrthoDB" id="9777067at2"/>
<dbReference type="UniPathway" id="UPA00087">
    <property type="reaction ID" value="UER00172"/>
</dbReference>
<dbReference type="Proteomes" id="UP000001963">
    <property type="component" value="Chromosome"/>
</dbReference>
<dbReference type="GO" id="GO:0005737">
    <property type="term" value="C:cytoplasm"/>
    <property type="evidence" value="ECO:0007669"/>
    <property type="project" value="UniProtKB-SubCell"/>
</dbReference>
<dbReference type="GO" id="GO:0002189">
    <property type="term" value="C:ribose phosphate diphosphokinase complex"/>
    <property type="evidence" value="ECO:0007669"/>
    <property type="project" value="TreeGrafter"/>
</dbReference>
<dbReference type="GO" id="GO:0005524">
    <property type="term" value="F:ATP binding"/>
    <property type="evidence" value="ECO:0007669"/>
    <property type="project" value="UniProtKB-KW"/>
</dbReference>
<dbReference type="GO" id="GO:0016301">
    <property type="term" value="F:kinase activity"/>
    <property type="evidence" value="ECO:0007669"/>
    <property type="project" value="UniProtKB-KW"/>
</dbReference>
<dbReference type="GO" id="GO:0000287">
    <property type="term" value="F:magnesium ion binding"/>
    <property type="evidence" value="ECO:0007669"/>
    <property type="project" value="UniProtKB-UniRule"/>
</dbReference>
<dbReference type="GO" id="GO:0004749">
    <property type="term" value="F:ribose phosphate diphosphokinase activity"/>
    <property type="evidence" value="ECO:0007669"/>
    <property type="project" value="UniProtKB-UniRule"/>
</dbReference>
<dbReference type="GO" id="GO:0006015">
    <property type="term" value="P:5-phosphoribose 1-diphosphate biosynthetic process"/>
    <property type="evidence" value="ECO:0007669"/>
    <property type="project" value="UniProtKB-UniRule"/>
</dbReference>
<dbReference type="GO" id="GO:0006164">
    <property type="term" value="P:purine nucleotide biosynthetic process"/>
    <property type="evidence" value="ECO:0007669"/>
    <property type="project" value="TreeGrafter"/>
</dbReference>
<dbReference type="GO" id="GO:0009156">
    <property type="term" value="P:ribonucleoside monophosphate biosynthetic process"/>
    <property type="evidence" value="ECO:0007669"/>
    <property type="project" value="InterPro"/>
</dbReference>
<dbReference type="CDD" id="cd06223">
    <property type="entry name" value="PRTases_typeI"/>
    <property type="match status" value="1"/>
</dbReference>
<dbReference type="FunFam" id="3.40.50.2020:FF:000001">
    <property type="entry name" value="Ribose-phosphate pyrophosphokinase"/>
    <property type="match status" value="1"/>
</dbReference>
<dbReference type="Gene3D" id="3.40.50.2020">
    <property type="match status" value="2"/>
</dbReference>
<dbReference type="HAMAP" id="MF_00583_B">
    <property type="entry name" value="RibP_PPkinase_B"/>
    <property type="match status" value="1"/>
</dbReference>
<dbReference type="InterPro" id="IPR000842">
    <property type="entry name" value="PRib_PP_synth_CS"/>
</dbReference>
<dbReference type="InterPro" id="IPR029099">
    <property type="entry name" value="Pribosyltran_N"/>
</dbReference>
<dbReference type="InterPro" id="IPR000836">
    <property type="entry name" value="PRibTrfase_dom"/>
</dbReference>
<dbReference type="InterPro" id="IPR029057">
    <property type="entry name" value="PRTase-like"/>
</dbReference>
<dbReference type="InterPro" id="IPR005946">
    <property type="entry name" value="Rib-P_diPkinase"/>
</dbReference>
<dbReference type="InterPro" id="IPR037515">
    <property type="entry name" value="Rib-P_diPkinase_bac"/>
</dbReference>
<dbReference type="NCBIfam" id="NF002320">
    <property type="entry name" value="PRK01259.1"/>
    <property type="match status" value="1"/>
</dbReference>
<dbReference type="NCBIfam" id="TIGR01251">
    <property type="entry name" value="ribP_PPkin"/>
    <property type="match status" value="1"/>
</dbReference>
<dbReference type="PANTHER" id="PTHR10210">
    <property type="entry name" value="RIBOSE-PHOSPHATE DIPHOSPHOKINASE FAMILY MEMBER"/>
    <property type="match status" value="1"/>
</dbReference>
<dbReference type="PANTHER" id="PTHR10210:SF41">
    <property type="entry name" value="RIBOSE-PHOSPHATE PYROPHOSPHOKINASE 1, CHLOROPLASTIC"/>
    <property type="match status" value="1"/>
</dbReference>
<dbReference type="Pfam" id="PF14572">
    <property type="entry name" value="Pribosyl_synth"/>
    <property type="match status" value="1"/>
</dbReference>
<dbReference type="Pfam" id="PF13793">
    <property type="entry name" value="Pribosyltran_N"/>
    <property type="match status" value="1"/>
</dbReference>
<dbReference type="SMART" id="SM01400">
    <property type="entry name" value="Pribosyltran_N"/>
    <property type="match status" value="1"/>
</dbReference>
<dbReference type="SUPFAM" id="SSF53271">
    <property type="entry name" value="PRTase-like"/>
    <property type="match status" value="1"/>
</dbReference>
<dbReference type="PROSITE" id="PS00114">
    <property type="entry name" value="PRPP_SYNTHASE"/>
    <property type="match status" value="1"/>
</dbReference>
<reference key="1">
    <citation type="journal article" date="2007" name="J. Bacteriol.">
        <title>Genome sequence analysis of the emerging human pathogenic acetic acid bacterium Granulibacter bethesdensis.</title>
        <authorList>
            <person name="Greenberg D.E."/>
            <person name="Porcella S.F."/>
            <person name="Zelazny A.M."/>
            <person name="Virtaneva K."/>
            <person name="Sturdevant D.E."/>
            <person name="Kupko J.J. III"/>
            <person name="Barbian K.D."/>
            <person name="Babar A."/>
            <person name="Dorward D.W."/>
            <person name="Holland S.M."/>
        </authorList>
    </citation>
    <scope>NUCLEOTIDE SEQUENCE [LARGE SCALE GENOMIC DNA]</scope>
    <source>
        <strain>ATCC BAA-1260 / CGDNIH1</strain>
    </source>
</reference>
<name>KPRS_GRABC</name>
<keyword id="KW-0067">ATP-binding</keyword>
<keyword id="KW-0963">Cytoplasm</keyword>
<keyword id="KW-0418">Kinase</keyword>
<keyword id="KW-0460">Magnesium</keyword>
<keyword id="KW-0479">Metal-binding</keyword>
<keyword id="KW-0545">Nucleotide biosynthesis</keyword>
<keyword id="KW-0547">Nucleotide-binding</keyword>
<keyword id="KW-1185">Reference proteome</keyword>
<keyword id="KW-0808">Transferase</keyword>
<proteinExistence type="inferred from homology"/>
<organism>
    <name type="scientific">Granulibacter bethesdensis (strain ATCC BAA-1260 / CGDNIH1)</name>
    <dbReference type="NCBI Taxonomy" id="391165"/>
    <lineage>
        <taxon>Bacteria</taxon>
        <taxon>Pseudomonadati</taxon>
        <taxon>Pseudomonadota</taxon>
        <taxon>Alphaproteobacteria</taxon>
        <taxon>Acetobacterales</taxon>
        <taxon>Acetobacteraceae</taxon>
        <taxon>Granulibacter</taxon>
    </lineage>
</organism>
<feature type="chain" id="PRO_1000025451" description="Ribose-phosphate pyrophosphokinase">
    <location>
        <begin position="1"/>
        <end position="310"/>
    </location>
</feature>
<feature type="active site" evidence="1">
    <location>
        <position position="190"/>
    </location>
</feature>
<feature type="binding site" evidence="1">
    <location>
        <begin position="34"/>
        <end position="36"/>
    </location>
    <ligand>
        <name>ATP</name>
        <dbReference type="ChEBI" id="CHEBI:30616"/>
    </ligand>
</feature>
<feature type="binding site" evidence="1">
    <location>
        <begin position="93"/>
        <end position="94"/>
    </location>
    <ligand>
        <name>ATP</name>
        <dbReference type="ChEBI" id="CHEBI:30616"/>
    </ligand>
</feature>
<feature type="binding site" evidence="1">
    <location>
        <position position="127"/>
    </location>
    <ligand>
        <name>Mg(2+)</name>
        <dbReference type="ChEBI" id="CHEBI:18420"/>
        <label>1</label>
    </ligand>
</feature>
<feature type="binding site" evidence="1">
    <location>
        <position position="167"/>
    </location>
    <ligand>
        <name>Mg(2+)</name>
        <dbReference type="ChEBI" id="CHEBI:18420"/>
        <label>2</label>
    </ligand>
</feature>
<feature type="binding site" evidence="1">
    <location>
        <position position="192"/>
    </location>
    <ligand>
        <name>D-ribose 5-phosphate</name>
        <dbReference type="ChEBI" id="CHEBI:78346"/>
    </ligand>
</feature>
<feature type="binding site" evidence="1">
    <location>
        <position position="216"/>
    </location>
    <ligand>
        <name>D-ribose 5-phosphate</name>
        <dbReference type="ChEBI" id="CHEBI:78346"/>
    </ligand>
</feature>
<feature type="binding site" evidence="1">
    <location>
        <begin position="220"/>
        <end position="224"/>
    </location>
    <ligand>
        <name>D-ribose 5-phosphate</name>
        <dbReference type="ChEBI" id="CHEBI:78346"/>
    </ligand>
</feature>
<protein>
    <recommendedName>
        <fullName evidence="1">Ribose-phosphate pyrophosphokinase</fullName>
        <shortName evidence="1">RPPK</shortName>
        <ecNumber evidence="1">2.7.6.1</ecNumber>
    </recommendedName>
    <alternativeName>
        <fullName evidence="1">5-phospho-D-ribosyl alpha-1-diphosphate synthase</fullName>
    </alternativeName>
    <alternativeName>
        <fullName evidence="1">Phosphoribosyl diphosphate synthase</fullName>
    </alternativeName>
    <alternativeName>
        <fullName evidence="1">Phosphoribosyl pyrophosphate synthase</fullName>
        <shortName evidence="1">P-Rib-PP synthase</shortName>
        <shortName evidence="1">PRPP synthase</shortName>
        <shortName evidence="1">PRPPase</shortName>
    </alternativeName>
</protein>
<gene>
    <name evidence="1" type="primary">prs</name>
    <name type="ordered locus">GbCGDNIH1_2314</name>
</gene>